<dbReference type="EMBL" id="CP000514">
    <property type="protein sequence ID" value="ABM17838.1"/>
    <property type="molecule type" value="Genomic_DNA"/>
</dbReference>
<dbReference type="RefSeq" id="WP_011784262.1">
    <property type="nucleotide sequence ID" value="NC_008740.1"/>
</dbReference>
<dbReference type="SMR" id="A1TYL9"/>
<dbReference type="STRING" id="351348.Maqu_0741"/>
<dbReference type="GeneID" id="31820115"/>
<dbReference type="KEGG" id="maq:Maqu_0741"/>
<dbReference type="eggNOG" id="COG0099">
    <property type="taxonomic scope" value="Bacteria"/>
</dbReference>
<dbReference type="HOGENOM" id="CLU_103849_1_2_6"/>
<dbReference type="OrthoDB" id="9803610at2"/>
<dbReference type="Proteomes" id="UP000000998">
    <property type="component" value="Chromosome"/>
</dbReference>
<dbReference type="GO" id="GO:0005829">
    <property type="term" value="C:cytosol"/>
    <property type="evidence" value="ECO:0007669"/>
    <property type="project" value="TreeGrafter"/>
</dbReference>
<dbReference type="GO" id="GO:0015935">
    <property type="term" value="C:small ribosomal subunit"/>
    <property type="evidence" value="ECO:0007669"/>
    <property type="project" value="TreeGrafter"/>
</dbReference>
<dbReference type="GO" id="GO:0019843">
    <property type="term" value="F:rRNA binding"/>
    <property type="evidence" value="ECO:0007669"/>
    <property type="project" value="UniProtKB-UniRule"/>
</dbReference>
<dbReference type="GO" id="GO:0003735">
    <property type="term" value="F:structural constituent of ribosome"/>
    <property type="evidence" value="ECO:0007669"/>
    <property type="project" value="InterPro"/>
</dbReference>
<dbReference type="GO" id="GO:0000049">
    <property type="term" value="F:tRNA binding"/>
    <property type="evidence" value="ECO:0007669"/>
    <property type="project" value="UniProtKB-UniRule"/>
</dbReference>
<dbReference type="GO" id="GO:0006412">
    <property type="term" value="P:translation"/>
    <property type="evidence" value="ECO:0007669"/>
    <property type="project" value="UniProtKB-UniRule"/>
</dbReference>
<dbReference type="FunFam" id="1.10.8.50:FF:000001">
    <property type="entry name" value="30S ribosomal protein S13"/>
    <property type="match status" value="1"/>
</dbReference>
<dbReference type="FunFam" id="4.10.910.10:FF:000001">
    <property type="entry name" value="30S ribosomal protein S13"/>
    <property type="match status" value="1"/>
</dbReference>
<dbReference type="Gene3D" id="1.10.8.50">
    <property type="match status" value="1"/>
</dbReference>
<dbReference type="Gene3D" id="4.10.910.10">
    <property type="entry name" value="30s ribosomal protein s13, domain 2"/>
    <property type="match status" value="1"/>
</dbReference>
<dbReference type="HAMAP" id="MF_01315">
    <property type="entry name" value="Ribosomal_uS13"/>
    <property type="match status" value="1"/>
</dbReference>
<dbReference type="InterPro" id="IPR027437">
    <property type="entry name" value="Rbsml_uS13_C"/>
</dbReference>
<dbReference type="InterPro" id="IPR001892">
    <property type="entry name" value="Ribosomal_uS13"/>
</dbReference>
<dbReference type="InterPro" id="IPR010979">
    <property type="entry name" value="Ribosomal_uS13-like_H2TH"/>
</dbReference>
<dbReference type="InterPro" id="IPR019980">
    <property type="entry name" value="Ribosomal_uS13_bac-type"/>
</dbReference>
<dbReference type="InterPro" id="IPR018269">
    <property type="entry name" value="Ribosomal_uS13_CS"/>
</dbReference>
<dbReference type="NCBIfam" id="TIGR03631">
    <property type="entry name" value="uS13_bact"/>
    <property type="match status" value="1"/>
</dbReference>
<dbReference type="PANTHER" id="PTHR10871">
    <property type="entry name" value="30S RIBOSOMAL PROTEIN S13/40S RIBOSOMAL PROTEIN S18"/>
    <property type="match status" value="1"/>
</dbReference>
<dbReference type="PANTHER" id="PTHR10871:SF1">
    <property type="entry name" value="SMALL RIBOSOMAL SUBUNIT PROTEIN US13M"/>
    <property type="match status" value="1"/>
</dbReference>
<dbReference type="Pfam" id="PF00416">
    <property type="entry name" value="Ribosomal_S13"/>
    <property type="match status" value="1"/>
</dbReference>
<dbReference type="PIRSF" id="PIRSF002134">
    <property type="entry name" value="Ribosomal_S13"/>
    <property type="match status" value="1"/>
</dbReference>
<dbReference type="SUPFAM" id="SSF46946">
    <property type="entry name" value="S13-like H2TH domain"/>
    <property type="match status" value="1"/>
</dbReference>
<dbReference type="PROSITE" id="PS00646">
    <property type="entry name" value="RIBOSOMAL_S13_1"/>
    <property type="match status" value="1"/>
</dbReference>
<dbReference type="PROSITE" id="PS50159">
    <property type="entry name" value="RIBOSOMAL_S13_2"/>
    <property type="match status" value="1"/>
</dbReference>
<reference key="1">
    <citation type="journal article" date="2011" name="Appl. Environ. Microbiol.">
        <title>Genomic potential of Marinobacter aquaeolei, a biogeochemical 'opportunitroph'.</title>
        <authorList>
            <person name="Singer E."/>
            <person name="Webb E.A."/>
            <person name="Nelson W.C."/>
            <person name="Heidelberg J.F."/>
            <person name="Ivanova N."/>
            <person name="Pati A."/>
            <person name="Edwards K.J."/>
        </authorList>
    </citation>
    <scope>NUCLEOTIDE SEQUENCE [LARGE SCALE GENOMIC DNA]</scope>
    <source>
        <strain>ATCC 700491 / DSM 11845 / VT8</strain>
    </source>
</reference>
<evidence type="ECO:0000255" key="1">
    <source>
        <dbReference type="HAMAP-Rule" id="MF_01315"/>
    </source>
</evidence>
<evidence type="ECO:0000256" key="2">
    <source>
        <dbReference type="SAM" id="MobiDB-lite"/>
    </source>
</evidence>
<evidence type="ECO:0000305" key="3"/>
<keyword id="KW-0687">Ribonucleoprotein</keyword>
<keyword id="KW-0689">Ribosomal protein</keyword>
<keyword id="KW-0694">RNA-binding</keyword>
<keyword id="KW-0699">rRNA-binding</keyword>
<keyword id="KW-0820">tRNA-binding</keyword>
<organism>
    <name type="scientific">Marinobacter nauticus (strain ATCC 700491 / DSM 11845 / VT8)</name>
    <name type="common">Marinobacter aquaeolei</name>
    <dbReference type="NCBI Taxonomy" id="351348"/>
    <lineage>
        <taxon>Bacteria</taxon>
        <taxon>Pseudomonadati</taxon>
        <taxon>Pseudomonadota</taxon>
        <taxon>Gammaproteobacteria</taxon>
        <taxon>Pseudomonadales</taxon>
        <taxon>Marinobacteraceae</taxon>
        <taxon>Marinobacter</taxon>
    </lineage>
</organism>
<proteinExistence type="inferred from homology"/>
<protein>
    <recommendedName>
        <fullName evidence="1">Small ribosomal subunit protein uS13</fullName>
    </recommendedName>
    <alternativeName>
        <fullName evidence="3">30S ribosomal protein S13</fullName>
    </alternativeName>
</protein>
<accession>A1TYL9</accession>
<name>RS13_MARN8</name>
<sequence>MARIAGVNIPDNKHAVISLTYIFGVGKTTAQKLCDATGVKPDAKVKDLSDEQLEALRTEVGKFTVEGDLRREVQMNIKRLKDLGCFRGLRHRHGLPVRGQRTKTNARTRKGPRKPIRK</sequence>
<gene>
    <name evidence="1" type="primary">rpsM</name>
    <name type="ordered locus">Maqu_0741</name>
</gene>
<comment type="function">
    <text evidence="1">Located at the top of the head of the 30S subunit, it contacts several helices of the 16S rRNA. In the 70S ribosome it contacts the 23S rRNA (bridge B1a) and protein L5 of the 50S subunit (bridge B1b), connecting the 2 subunits; these bridges are implicated in subunit movement. Contacts the tRNAs in the A and P-sites.</text>
</comment>
<comment type="subunit">
    <text evidence="1">Part of the 30S ribosomal subunit. Forms a loose heterodimer with protein S19. Forms two bridges to the 50S subunit in the 70S ribosome.</text>
</comment>
<comment type="similarity">
    <text evidence="1">Belongs to the universal ribosomal protein uS13 family.</text>
</comment>
<feature type="chain" id="PRO_0000306641" description="Small ribosomal subunit protein uS13">
    <location>
        <begin position="1"/>
        <end position="118"/>
    </location>
</feature>
<feature type="region of interest" description="Disordered" evidence="2">
    <location>
        <begin position="94"/>
        <end position="118"/>
    </location>
</feature>